<dbReference type="EC" id="4.3.2.1" evidence="1"/>
<dbReference type="EMBL" id="CT573326">
    <property type="protein sequence ID" value="CAK17972.1"/>
    <property type="molecule type" value="Genomic_DNA"/>
</dbReference>
<dbReference type="RefSeq" id="WP_011536330.1">
    <property type="nucleotide sequence ID" value="NC_008027.1"/>
</dbReference>
<dbReference type="SMR" id="Q1I314"/>
<dbReference type="STRING" id="384676.PSEEN5355"/>
<dbReference type="GeneID" id="32808268"/>
<dbReference type="KEGG" id="pen:PSEEN5355"/>
<dbReference type="eggNOG" id="COG0165">
    <property type="taxonomic scope" value="Bacteria"/>
</dbReference>
<dbReference type="HOGENOM" id="CLU_027272_2_3_6"/>
<dbReference type="OrthoDB" id="9769623at2"/>
<dbReference type="UniPathway" id="UPA00068">
    <property type="reaction ID" value="UER00114"/>
</dbReference>
<dbReference type="Proteomes" id="UP000000658">
    <property type="component" value="Chromosome"/>
</dbReference>
<dbReference type="GO" id="GO:0005829">
    <property type="term" value="C:cytosol"/>
    <property type="evidence" value="ECO:0007669"/>
    <property type="project" value="TreeGrafter"/>
</dbReference>
<dbReference type="GO" id="GO:0004056">
    <property type="term" value="F:argininosuccinate lyase activity"/>
    <property type="evidence" value="ECO:0007669"/>
    <property type="project" value="UniProtKB-UniRule"/>
</dbReference>
<dbReference type="GO" id="GO:0042450">
    <property type="term" value="P:arginine biosynthetic process via ornithine"/>
    <property type="evidence" value="ECO:0007669"/>
    <property type="project" value="InterPro"/>
</dbReference>
<dbReference type="GO" id="GO:0006526">
    <property type="term" value="P:L-arginine biosynthetic process"/>
    <property type="evidence" value="ECO:0007669"/>
    <property type="project" value="UniProtKB-UniRule"/>
</dbReference>
<dbReference type="CDD" id="cd01359">
    <property type="entry name" value="Argininosuccinate_lyase"/>
    <property type="match status" value="1"/>
</dbReference>
<dbReference type="FunFam" id="1.10.275.10:FF:000002">
    <property type="entry name" value="Argininosuccinate lyase"/>
    <property type="match status" value="1"/>
</dbReference>
<dbReference type="FunFam" id="1.10.40.30:FF:000001">
    <property type="entry name" value="Argininosuccinate lyase"/>
    <property type="match status" value="1"/>
</dbReference>
<dbReference type="FunFam" id="1.20.200.10:FF:000015">
    <property type="entry name" value="argininosuccinate lyase isoform X2"/>
    <property type="match status" value="1"/>
</dbReference>
<dbReference type="Gene3D" id="1.10.40.30">
    <property type="entry name" value="Fumarase/aspartase (C-terminal domain)"/>
    <property type="match status" value="1"/>
</dbReference>
<dbReference type="Gene3D" id="1.20.200.10">
    <property type="entry name" value="Fumarase/aspartase (Central domain)"/>
    <property type="match status" value="1"/>
</dbReference>
<dbReference type="Gene3D" id="1.10.275.10">
    <property type="entry name" value="Fumarase/aspartase (N-terminal domain)"/>
    <property type="match status" value="1"/>
</dbReference>
<dbReference type="HAMAP" id="MF_00006">
    <property type="entry name" value="Arg_succ_lyase"/>
    <property type="match status" value="1"/>
</dbReference>
<dbReference type="InterPro" id="IPR029419">
    <property type="entry name" value="Arg_succ_lyase_C"/>
</dbReference>
<dbReference type="InterPro" id="IPR009049">
    <property type="entry name" value="Argininosuccinate_lyase"/>
</dbReference>
<dbReference type="InterPro" id="IPR024083">
    <property type="entry name" value="Fumarase/histidase_N"/>
</dbReference>
<dbReference type="InterPro" id="IPR020557">
    <property type="entry name" value="Fumarate_lyase_CS"/>
</dbReference>
<dbReference type="InterPro" id="IPR000362">
    <property type="entry name" value="Fumarate_lyase_fam"/>
</dbReference>
<dbReference type="InterPro" id="IPR022761">
    <property type="entry name" value="Fumarate_lyase_N"/>
</dbReference>
<dbReference type="InterPro" id="IPR008948">
    <property type="entry name" value="L-Aspartase-like"/>
</dbReference>
<dbReference type="NCBIfam" id="TIGR00838">
    <property type="entry name" value="argH"/>
    <property type="match status" value="1"/>
</dbReference>
<dbReference type="PANTHER" id="PTHR43814">
    <property type="entry name" value="ARGININOSUCCINATE LYASE"/>
    <property type="match status" value="1"/>
</dbReference>
<dbReference type="PANTHER" id="PTHR43814:SF1">
    <property type="entry name" value="ARGININOSUCCINATE LYASE"/>
    <property type="match status" value="1"/>
</dbReference>
<dbReference type="Pfam" id="PF14698">
    <property type="entry name" value="ASL_C2"/>
    <property type="match status" value="1"/>
</dbReference>
<dbReference type="Pfam" id="PF00206">
    <property type="entry name" value="Lyase_1"/>
    <property type="match status" value="1"/>
</dbReference>
<dbReference type="PRINTS" id="PR00145">
    <property type="entry name" value="ARGSUCLYASE"/>
</dbReference>
<dbReference type="PRINTS" id="PR00149">
    <property type="entry name" value="FUMRATELYASE"/>
</dbReference>
<dbReference type="SUPFAM" id="SSF48557">
    <property type="entry name" value="L-aspartase-like"/>
    <property type="match status" value="1"/>
</dbReference>
<dbReference type="PROSITE" id="PS00163">
    <property type="entry name" value="FUMARATE_LYASES"/>
    <property type="match status" value="1"/>
</dbReference>
<accession>Q1I314</accession>
<name>ARLY_PSEE4</name>
<organism>
    <name type="scientific">Pseudomonas entomophila (strain L48)</name>
    <dbReference type="NCBI Taxonomy" id="384676"/>
    <lineage>
        <taxon>Bacteria</taxon>
        <taxon>Pseudomonadati</taxon>
        <taxon>Pseudomonadota</taxon>
        <taxon>Gammaproteobacteria</taxon>
        <taxon>Pseudomonadales</taxon>
        <taxon>Pseudomonadaceae</taxon>
        <taxon>Pseudomonas</taxon>
    </lineage>
</organism>
<reference key="1">
    <citation type="journal article" date="2006" name="Nat. Biotechnol.">
        <title>Complete genome sequence of the entomopathogenic and metabolically versatile soil bacterium Pseudomonas entomophila.</title>
        <authorList>
            <person name="Vodovar N."/>
            <person name="Vallenet D."/>
            <person name="Cruveiller S."/>
            <person name="Rouy Z."/>
            <person name="Barbe V."/>
            <person name="Acosta C."/>
            <person name="Cattolico L."/>
            <person name="Jubin C."/>
            <person name="Lajus A."/>
            <person name="Segurens B."/>
            <person name="Vacherie B."/>
            <person name="Wincker P."/>
            <person name="Weissenbach J."/>
            <person name="Lemaitre B."/>
            <person name="Medigue C."/>
            <person name="Boccard F."/>
        </authorList>
    </citation>
    <scope>NUCLEOTIDE SEQUENCE [LARGE SCALE GENOMIC DNA]</scope>
    <source>
        <strain>L48</strain>
    </source>
</reference>
<comment type="catalytic activity">
    <reaction evidence="1">
        <text>2-(N(omega)-L-arginino)succinate = fumarate + L-arginine</text>
        <dbReference type="Rhea" id="RHEA:24020"/>
        <dbReference type="ChEBI" id="CHEBI:29806"/>
        <dbReference type="ChEBI" id="CHEBI:32682"/>
        <dbReference type="ChEBI" id="CHEBI:57472"/>
        <dbReference type="EC" id="4.3.2.1"/>
    </reaction>
</comment>
<comment type="pathway">
    <text evidence="1">Amino-acid biosynthesis; L-arginine biosynthesis; L-arginine from L-ornithine and carbamoyl phosphate: step 3/3.</text>
</comment>
<comment type="subcellular location">
    <subcellularLocation>
        <location evidence="1">Cytoplasm</location>
    </subcellularLocation>
</comment>
<comment type="similarity">
    <text evidence="1">Belongs to the lyase 1 family. Argininosuccinate lyase subfamily.</text>
</comment>
<feature type="chain" id="PRO_1000000526" description="Argininosuccinate lyase">
    <location>
        <begin position="1"/>
        <end position="464"/>
    </location>
</feature>
<keyword id="KW-0028">Amino-acid biosynthesis</keyword>
<keyword id="KW-0055">Arginine biosynthesis</keyword>
<keyword id="KW-0963">Cytoplasm</keyword>
<keyword id="KW-0456">Lyase</keyword>
<proteinExistence type="inferred from homology"/>
<evidence type="ECO:0000255" key="1">
    <source>
        <dbReference type="HAMAP-Rule" id="MF_00006"/>
    </source>
</evidence>
<sequence>MSTDKTNQSWGGRFSEPVDAFVARFTASVDFDKRLYRHDIMGSIAHATMLAQVGVLNDKERDTIIDGLKTIQGEIEAGNFDWRVDLEDVHMNIEARLTDRIGITGKKLHTGRSRNDQVATDIRLWLRDEIDIILGEITRLQQGLLEQAEREAETIMPGFTHLQTAQPVTFGHHLLAWFEMLSRDYERLVDCRKRANRMPLGSAALAGTTYPIDRELTCKLLGFEAVAGNSLDGVSDRDFAIEFCAAASIAMMHLSRFSEELVLWTSAQFQFIDLPDRFCTGSSIMPQKKNPDVPELVRGKTGRVFGALTGLLTLMKGQPLAYNKDNQEDKEPLFDAADTLRDSLRAFADMIPAIKPKHAIMREAALRGFSTATDLADYLVRRGLPFRDCHEIVGHAVKYGVDTGKDLAEMSLDELRQFSDQIEQDVFAVLTLEGSVNARNHIGGTAPAQVRAAVARGKALLASR</sequence>
<protein>
    <recommendedName>
        <fullName evidence="1">Argininosuccinate lyase</fullName>
        <shortName evidence="1">ASAL</shortName>
        <ecNumber evidence="1">4.3.2.1</ecNumber>
    </recommendedName>
    <alternativeName>
        <fullName evidence="1">Arginosuccinase</fullName>
    </alternativeName>
</protein>
<gene>
    <name evidence="1" type="primary">argH</name>
    <name type="ordered locus">PSEEN5355</name>
</gene>